<comment type="function">
    <text evidence="1">Component of the type II secretion system required for the energy-dependent secretion of extracellular factors such as proteases and toxins from the periplasm. Part of the pseudopilus tip complex that is critical for the recognition and binding of secretion substrates.</text>
</comment>
<comment type="subunit">
    <text evidence="1">Type II secretion is composed of four main components: the outer membrane complex, the inner membrane complex, the cytoplasmic secretion ATPase and the periplasm-spanning pseudopilus. Interacts with core component OutG.</text>
</comment>
<comment type="subcellular location">
    <subcellularLocation>
        <location evidence="1">Cell inner membrane</location>
        <topology evidence="2">Single-pass membrane protein</topology>
    </subcellularLocation>
</comment>
<comment type="PTM">
    <text evidence="1">Cleaved by prepilin peptidase.</text>
</comment>
<comment type="PTM">
    <text evidence="1">Methylated by prepilin peptidase at the amino group of the N-terminal methionine once the leader sequence is cleaved by prepilin peptidase.</text>
</comment>
<comment type="similarity">
    <text evidence="4">Belongs to the GSP I family.</text>
</comment>
<evidence type="ECO:0000250" key="1">
    <source>
        <dbReference type="UniProtKB" id="Q00516"/>
    </source>
</evidence>
<evidence type="ECO:0000255" key="2"/>
<evidence type="ECO:0000255" key="3">
    <source>
        <dbReference type="PROSITE-ProRule" id="PRU01070"/>
    </source>
</evidence>
<evidence type="ECO:0000305" key="4"/>
<feature type="propeptide" id="PRO_0000024234" description="Leader sequence" evidence="3">
    <location>
        <begin position="1"/>
        <end position="6"/>
    </location>
</feature>
<feature type="chain" id="PRO_0000024235" description="Type II secretion system protein I">
    <location>
        <begin position="7"/>
        <end position="121"/>
    </location>
</feature>
<feature type="transmembrane region" description="Helical" evidence="2">
    <location>
        <begin position="7"/>
        <end position="27"/>
    </location>
</feature>
<feature type="modified residue" description="N-methylmethionine" evidence="3">
    <location>
        <position position="7"/>
    </location>
</feature>
<reference key="1">
    <citation type="journal article" date="1993" name="Mol. Microbiol.">
        <title>Molecular cloning and characterization of 13 out genes from Erwinia carotovora subspecies carotovora: genes encoding members of a general secretion pathway (GSP) widespread in Gram-negative bacteria.</title>
        <authorList>
            <person name="Reeves P.J."/>
            <person name="Whitcombe D."/>
            <person name="Wharam S."/>
            <person name="Gibson M."/>
            <person name="Allison G."/>
            <person name="Bunce N."/>
            <person name="Barallon R."/>
            <person name="Douglas P."/>
            <person name="Mulholland V."/>
            <person name="Stevens S."/>
            <person name="Walker S."/>
            <person name="Salmond G.P.C."/>
        </authorList>
    </citation>
    <scope>NUCLEOTIDE SEQUENCE [GENOMIC DNA]</scope>
    <source>
        <strain>SCRI 193</strain>
    </source>
</reference>
<proteinExistence type="inferred from homology"/>
<accession>P31588</accession>
<gene>
    <name type="primary">outI</name>
</gene>
<protein>
    <recommendedName>
        <fullName>Type II secretion system protein I</fullName>
        <shortName>T2SS minor pseudopilin I</shortName>
    </recommendedName>
    <alternativeName>
        <fullName>General secretion pathway protein I</fullName>
    </alternativeName>
    <alternativeName>
        <fullName>Pectic enzymes secretion protein OutI</fullName>
    </alternativeName>
</protein>
<organism>
    <name type="scientific">Pectobacterium carotovorum subsp. carotovorum</name>
    <name type="common">Erwinia carotovora subsp. carotovora</name>
    <dbReference type="NCBI Taxonomy" id="555"/>
    <lineage>
        <taxon>Bacteria</taxon>
        <taxon>Pseudomonadati</taxon>
        <taxon>Pseudomonadota</taxon>
        <taxon>Gammaproteobacteria</taxon>
        <taxon>Enterobacterales</taxon>
        <taxon>Pectobacteriaceae</taxon>
        <taxon>Pectobacterium</taxon>
    </lineage>
</organism>
<sequence length="121" mass="13813">MRRQKGMTLVEVLVALSVFALAGIAVLQTTARQASSLSRLEEKTFAGWVAENQQVQLRLEQRWPEASWVRGETQFAGLRWHWRWQGVETGDPQTKALDVEVRRNKDAFAADASLRTYVVKQ</sequence>
<keyword id="KW-0997">Cell inner membrane</keyword>
<keyword id="KW-1003">Cell membrane</keyword>
<keyword id="KW-0472">Membrane</keyword>
<keyword id="KW-0488">Methylation</keyword>
<keyword id="KW-0653">Protein transport</keyword>
<keyword id="KW-0812">Transmembrane</keyword>
<keyword id="KW-1133">Transmembrane helix</keyword>
<keyword id="KW-0813">Transport</keyword>
<dbReference type="EMBL" id="X70049">
    <property type="protein sequence ID" value="CAA49650.1"/>
    <property type="molecule type" value="Genomic_DNA"/>
</dbReference>
<dbReference type="PIR" id="S32863">
    <property type="entry name" value="S32863"/>
</dbReference>
<dbReference type="SMR" id="P31588"/>
<dbReference type="GO" id="GO:0005886">
    <property type="term" value="C:plasma membrane"/>
    <property type="evidence" value="ECO:0007669"/>
    <property type="project" value="UniProtKB-SubCell"/>
</dbReference>
<dbReference type="GO" id="GO:0015627">
    <property type="term" value="C:type II protein secretion system complex"/>
    <property type="evidence" value="ECO:0007669"/>
    <property type="project" value="InterPro"/>
</dbReference>
<dbReference type="GO" id="GO:0015628">
    <property type="term" value="P:protein secretion by the type II secretion system"/>
    <property type="evidence" value="ECO:0007669"/>
    <property type="project" value="InterPro"/>
</dbReference>
<dbReference type="Gene3D" id="3.30.1300.30">
    <property type="entry name" value="GSPII I/J protein-like"/>
    <property type="match status" value="1"/>
</dbReference>
<dbReference type="InterPro" id="IPR012902">
    <property type="entry name" value="N_methyl_site"/>
</dbReference>
<dbReference type="InterPro" id="IPR045584">
    <property type="entry name" value="Pilin-like"/>
</dbReference>
<dbReference type="InterPro" id="IPR003413">
    <property type="entry name" value="T2SS_GspI_C"/>
</dbReference>
<dbReference type="InterPro" id="IPR010052">
    <property type="entry name" value="T2SS_protein-GspI"/>
</dbReference>
<dbReference type="NCBIfam" id="TIGR01707">
    <property type="entry name" value="gspI"/>
    <property type="match status" value="1"/>
</dbReference>
<dbReference type="NCBIfam" id="TIGR02532">
    <property type="entry name" value="IV_pilin_GFxxxE"/>
    <property type="match status" value="1"/>
</dbReference>
<dbReference type="PANTHER" id="PTHR38779">
    <property type="entry name" value="TYPE II SECRETION SYSTEM PROTEIN I-RELATED"/>
    <property type="match status" value="1"/>
</dbReference>
<dbReference type="PANTHER" id="PTHR38779:SF2">
    <property type="entry name" value="TYPE II SECRETION SYSTEM PROTEIN I-RELATED"/>
    <property type="match status" value="1"/>
</dbReference>
<dbReference type="Pfam" id="PF07963">
    <property type="entry name" value="N_methyl"/>
    <property type="match status" value="1"/>
</dbReference>
<dbReference type="Pfam" id="PF02501">
    <property type="entry name" value="T2SSI"/>
    <property type="match status" value="1"/>
</dbReference>
<dbReference type="SUPFAM" id="SSF54523">
    <property type="entry name" value="Pili subunits"/>
    <property type="match status" value="1"/>
</dbReference>
<dbReference type="PROSITE" id="PS00409">
    <property type="entry name" value="PROKAR_NTER_METHYL"/>
    <property type="match status" value="1"/>
</dbReference>
<name>GSPI_PECCC</name>